<organism>
    <name type="scientific">Bifidobacterium longum (strain NCC 2705)</name>
    <dbReference type="NCBI Taxonomy" id="206672"/>
    <lineage>
        <taxon>Bacteria</taxon>
        <taxon>Bacillati</taxon>
        <taxon>Actinomycetota</taxon>
        <taxon>Actinomycetes</taxon>
        <taxon>Bifidobacteriales</taxon>
        <taxon>Bifidobacteriaceae</taxon>
        <taxon>Bifidobacterium</taxon>
    </lineage>
</organism>
<keyword id="KW-0028">Amino-acid biosynthesis</keyword>
<keyword id="KW-0057">Aromatic amino acid biosynthesis</keyword>
<keyword id="KW-0456">Lyase</keyword>
<keyword id="KW-1185">Reference proteome</keyword>
<keyword id="KW-0822">Tryptophan biosynthesis</keyword>
<gene>
    <name evidence="1" type="primary">trpA</name>
    <name type="ordered locus">BL0755</name>
</gene>
<feature type="chain" id="PRO_0000098746" description="Tryptophan synthase alpha chain">
    <location>
        <begin position="1"/>
        <end position="291"/>
    </location>
</feature>
<feature type="active site" description="Proton acceptor" evidence="1">
    <location>
        <position position="69"/>
    </location>
</feature>
<feature type="active site" description="Proton acceptor" evidence="1">
    <location>
        <position position="80"/>
    </location>
</feature>
<comment type="function">
    <text evidence="1">The alpha subunit is responsible for the aldol cleavage of indoleglycerol phosphate to indole and glyceraldehyde 3-phosphate.</text>
</comment>
<comment type="catalytic activity">
    <reaction evidence="1">
        <text>(1S,2R)-1-C-(indol-3-yl)glycerol 3-phosphate + L-serine = D-glyceraldehyde 3-phosphate + L-tryptophan + H2O</text>
        <dbReference type="Rhea" id="RHEA:10532"/>
        <dbReference type="ChEBI" id="CHEBI:15377"/>
        <dbReference type="ChEBI" id="CHEBI:33384"/>
        <dbReference type="ChEBI" id="CHEBI:57912"/>
        <dbReference type="ChEBI" id="CHEBI:58866"/>
        <dbReference type="ChEBI" id="CHEBI:59776"/>
        <dbReference type="EC" id="4.2.1.20"/>
    </reaction>
</comment>
<comment type="pathway">
    <text evidence="1">Amino-acid biosynthesis; L-tryptophan biosynthesis; L-tryptophan from chorismate: step 5/5.</text>
</comment>
<comment type="subunit">
    <text evidence="1">Tetramer of two alpha and two beta chains.</text>
</comment>
<comment type="similarity">
    <text evidence="1">Belongs to the TrpA family.</text>
</comment>
<protein>
    <recommendedName>
        <fullName evidence="1">Tryptophan synthase alpha chain</fullName>
        <ecNumber evidence="1">4.2.1.20</ecNumber>
    </recommendedName>
</protein>
<name>TRPA_BIFLO</name>
<sequence length="291" mass="30932">MIMTNEATTPSGQPLGISHKPSKSGAMFTKFKAENKPAFIGYLPYGFPNPDVSLDAFKTMVEHGVDAVEIGLPYSDPVMDGPVIQAAASIALNNGETIKRVFEAVETVANAGGVPLIMSYWNLVYHYGVERFARDFENAGGAGLITPDLIPDEAGEWIEASDRHGLDRIFLVSPDSSTERLETVARNARGFVYAAARMGVTGERATIDASPELLVERTRQAGAENVCVGIGVSTAEQGAKVGSYADGVIVGSALVHTLLADDNKTARDPKEGLKLLAAKSEELAEGIHNAR</sequence>
<evidence type="ECO:0000255" key="1">
    <source>
        <dbReference type="HAMAP-Rule" id="MF_00131"/>
    </source>
</evidence>
<reference key="1">
    <citation type="journal article" date="2002" name="Proc. Natl. Acad. Sci. U.S.A.">
        <title>The genome sequence of Bifidobacterium longum reflects its adaptation to the human gastrointestinal tract.</title>
        <authorList>
            <person name="Schell M.A."/>
            <person name="Karmirantzou M."/>
            <person name="Snel B."/>
            <person name="Vilanova D."/>
            <person name="Berger B."/>
            <person name="Pessi G."/>
            <person name="Zwahlen M.-C."/>
            <person name="Desiere F."/>
            <person name="Bork P."/>
            <person name="Delley M."/>
            <person name="Pridmore R.D."/>
            <person name="Arigoni F."/>
        </authorList>
    </citation>
    <scope>NUCLEOTIDE SEQUENCE [LARGE SCALE GENOMIC DNA]</scope>
    <source>
        <strain>NCC 2705</strain>
    </source>
</reference>
<accession>Q8G691</accession>
<dbReference type="EC" id="4.2.1.20" evidence="1"/>
<dbReference type="EMBL" id="AE014295">
    <property type="protein sequence ID" value="AAN24572.1"/>
    <property type="molecule type" value="Genomic_DNA"/>
</dbReference>
<dbReference type="RefSeq" id="NP_695936.1">
    <property type="nucleotide sequence ID" value="NC_004307.2"/>
</dbReference>
<dbReference type="SMR" id="Q8G691"/>
<dbReference type="STRING" id="206672.BL0755"/>
<dbReference type="EnsemblBacteria" id="AAN24572">
    <property type="protein sequence ID" value="AAN24572"/>
    <property type="gene ID" value="BL0755"/>
</dbReference>
<dbReference type="KEGG" id="blo:BL0755"/>
<dbReference type="PATRIC" id="fig|206672.9.peg.454"/>
<dbReference type="HOGENOM" id="CLU_016734_0_0_11"/>
<dbReference type="OrthoDB" id="9804578at2"/>
<dbReference type="PhylomeDB" id="Q8G691"/>
<dbReference type="UniPathway" id="UPA00035">
    <property type="reaction ID" value="UER00044"/>
</dbReference>
<dbReference type="Proteomes" id="UP000000439">
    <property type="component" value="Chromosome"/>
</dbReference>
<dbReference type="GO" id="GO:0005829">
    <property type="term" value="C:cytosol"/>
    <property type="evidence" value="ECO:0007669"/>
    <property type="project" value="TreeGrafter"/>
</dbReference>
<dbReference type="GO" id="GO:0004834">
    <property type="term" value="F:tryptophan synthase activity"/>
    <property type="evidence" value="ECO:0007669"/>
    <property type="project" value="UniProtKB-UniRule"/>
</dbReference>
<dbReference type="CDD" id="cd04724">
    <property type="entry name" value="Tryptophan_synthase_alpha"/>
    <property type="match status" value="1"/>
</dbReference>
<dbReference type="FunFam" id="3.20.20.70:FF:000037">
    <property type="entry name" value="Tryptophan synthase alpha chain"/>
    <property type="match status" value="1"/>
</dbReference>
<dbReference type="Gene3D" id="3.20.20.70">
    <property type="entry name" value="Aldolase class I"/>
    <property type="match status" value="1"/>
</dbReference>
<dbReference type="HAMAP" id="MF_00131">
    <property type="entry name" value="Trp_synth_alpha"/>
    <property type="match status" value="1"/>
</dbReference>
<dbReference type="InterPro" id="IPR013785">
    <property type="entry name" value="Aldolase_TIM"/>
</dbReference>
<dbReference type="InterPro" id="IPR011060">
    <property type="entry name" value="RibuloseP-bd_barrel"/>
</dbReference>
<dbReference type="InterPro" id="IPR018204">
    <property type="entry name" value="Trp_synthase_alpha_AS"/>
</dbReference>
<dbReference type="InterPro" id="IPR002028">
    <property type="entry name" value="Trp_synthase_suA"/>
</dbReference>
<dbReference type="NCBIfam" id="TIGR00262">
    <property type="entry name" value="trpA"/>
    <property type="match status" value="1"/>
</dbReference>
<dbReference type="PANTHER" id="PTHR43406:SF1">
    <property type="entry name" value="TRYPTOPHAN SYNTHASE ALPHA CHAIN, CHLOROPLASTIC"/>
    <property type="match status" value="1"/>
</dbReference>
<dbReference type="PANTHER" id="PTHR43406">
    <property type="entry name" value="TRYPTOPHAN SYNTHASE, ALPHA CHAIN"/>
    <property type="match status" value="1"/>
</dbReference>
<dbReference type="Pfam" id="PF00290">
    <property type="entry name" value="Trp_syntA"/>
    <property type="match status" value="1"/>
</dbReference>
<dbReference type="SUPFAM" id="SSF51366">
    <property type="entry name" value="Ribulose-phoshate binding barrel"/>
    <property type="match status" value="1"/>
</dbReference>
<dbReference type="PROSITE" id="PS00167">
    <property type="entry name" value="TRP_SYNTHASE_ALPHA"/>
    <property type="match status" value="1"/>
</dbReference>
<proteinExistence type="inferred from homology"/>